<keyword id="KW-0963">Cytoplasm</keyword>
<keyword id="KW-0312">Gluconeogenesis</keyword>
<keyword id="KW-0324">Glycolysis</keyword>
<keyword id="KW-0413">Isomerase</keyword>
<accession>Q9JTW1</accession>
<accession>A1ISI7</accession>
<name>G6PI1_NEIMA</name>
<protein>
    <recommendedName>
        <fullName evidence="1">Glucose-6-phosphate isomerase 1</fullName>
        <shortName evidence="1">GPI 1</shortName>
        <ecNumber evidence="1">5.3.1.9</ecNumber>
    </recommendedName>
    <alternativeName>
        <fullName evidence="1">Phosphoglucose isomerase 1</fullName>
        <shortName evidence="1">PGI 1</shortName>
    </alternativeName>
    <alternativeName>
        <fullName evidence="1">Phosphohexose isomerase 1</fullName>
        <shortName evidence="1">PHI 1</shortName>
    </alternativeName>
</protein>
<evidence type="ECO:0000255" key="1">
    <source>
        <dbReference type="HAMAP-Rule" id="MF_00473"/>
    </source>
</evidence>
<evidence type="ECO:0000305" key="2"/>
<reference key="1">
    <citation type="journal article" date="2000" name="Nature">
        <title>Complete DNA sequence of a serogroup A strain of Neisseria meningitidis Z2491.</title>
        <authorList>
            <person name="Parkhill J."/>
            <person name="Achtman M."/>
            <person name="James K.D."/>
            <person name="Bentley S.D."/>
            <person name="Churcher C.M."/>
            <person name="Klee S.R."/>
            <person name="Morelli G."/>
            <person name="Basham D."/>
            <person name="Brown D."/>
            <person name="Chillingworth T."/>
            <person name="Davies R.M."/>
            <person name="Davis P."/>
            <person name="Devlin K."/>
            <person name="Feltwell T."/>
            <person name="Hamlin N."/>
            <person name="Holroyd S."/>
            <person name="Jagels K."/>
            <person name="Leather S."/>
            <person name="Moule S."/>
            <person name="Mungall K.L."/>
            <person name="Quail M.A."/>
            <person name="Rajandream M.A."/>
            <person name="Rutherford K.M."/>
            <person name="Simmonds M."/>
            <person name="Skelton J."/>
            <person name="Whitehead S."/>
            <person name="Spratt B.G."/>
            <person name="Barrell B.G."/>
        </authorList>
    </citation>
    <scope>NUCLEOTIDE SEQUENCE [LARGE SCALE GENOMIC DNA]</scope>
    <source>
        <strain>DSM 15465 / Z2491</strain>
    </source>
</reference>
<sequence length="548" mass="62026">MKHLHDLPAWSKLWNHFDDSKTLHMREMFEQDPQRAERYWLQVGGLTLDYSKNRINDETMSLLFELAHEAGVPERMRQMFHGKKINTTENRAVLHVALRNRTNSPIVVDGEDVMPKVNRVLQRMGEFAHEVRSGSWLGYTNQVITDVVNIGIGGSDLGPLMMCTALKPFGHPRLNMHFVSNVDGSQLRDVLSKVHPETTLFIIASKTFTTQETLTNALTAREWFLNHAGDEEAVAKHFAAVSTNQKAVAEFGIDTANMFEFWDWVGGRYSLWSAIGLPIMLYLGEENFIEMLNGAHLMDQHFINTPLERNLPVILALIGIWYINYYGGGSHVIAPYDQHLHRLPKFIQQLDMESNGKQVTLDGKAVGHETSPIIWGETGINGQHAFFQLLHQGTHITPIDLIASLEKRSNLPGHHEILLANVFAQAEAFMRGKTPDEVRAELKAQGMDEARIEELVPHKTFSGNRPTNLILMDKVNPRNMGSLIAMYEHKTFVQGIIWGINSFDQWGVELGKQLAKTILGELTGETGSQKHDSSTERLINLYLQTNRK</sequence>
<organism>
    <name type="scientific">Neisseria meningitidis serogroup A / serotype 4A (strain DSM 15465 / Z2491)</name>
    <dbReference type="NCBI Taxonomy" id="122587"/>
    <lineage>
        <taxon>Bacteria</taxon>
        <taxon>Pseudomonadati</taxon>
        <taxon>Pseudomonadota</taxon>
        <taxon>Betaproteobacteria</taxon>
        <taxon>Neisseriales</taxon>
        <taxon>Neisseriaceae</taxon>
        <taxon>Neisseria</taxon>
    </lineage>
</organism>
<feature type="chain" id="PRO_0000180691" description="Glucose-6-phosphate isomerase 1">
    <location>
        <begin position="1"/>
        <end position="548"/>
    </location>
</feature>
<feature type="active site" description="Proton donor" evidence="1">
    <location>
        <position position="353"/>
    </location>
</feature>
<feature type="active site" evidence="1">
    <location>
        <position position="384"/>
    </location>
</feature>
<feature type="active site" evidence="1">
    <location>
        <position position="512"/>
    </location>
</feature>
<proteinExistence type="inferred from homology"/>
<gene>
    <name evidence="1" type="primary">pgi1</name>
    <name type="ordered locus">NMA1604</name>
</gene>
<dbReference type="EC" id="5.3.1.9" evidence="1"/>
<dbReference type="EMBL" id="AL157959">
    <property type="protein sequence ID" value="CAM08745.1"/>
    <property type="molecule type" value="Genomic_DNA"/>
</dbReference>
<dbReference type="PIR" id="A81854">
    <property type="entry name" value="A81854"/>
</dbReference>
<dbReference type="SMR" id="Q9JTW1"/>
<dbReference type="EnsemblBacteria" id="CAM08745">
    <property type="protein sequence ID" value="CAM08745"/>
    <property type="gene ID" value="NMA1604"/>
</dbReference>
<dbReference type="KEGG" id="nma:NMA1604"/>
<dbReference type="HOGENOM" id="CLU_017947_3_1_4"/>
<dbReference type="UniPathway" id="UPA00109">
    <property type="reaction ID" value="UER00181"/>
</dbReference>
<dbReference type="UniPathway" id="UPA00138"/>
<dbReference type="Proteomes" id="UP000000626">
    <property type="component" value="Chromosome"/>
</dbReference>
<dbReference type="GO" id="GO:0005829">
    <property type="term" value="C:cytosol"/>
    <property type="evidence" value="ECO:0007669"/>
    <property type="project" value="TreeGrafter"/>
</dbReference>
<dbReference type="GO" id="GO:0097367">
    <property type="term" value="F:carbohydrate derivative binding"/>
    <property type="evidence" value="ECO:0007669"/>
    <property type="project" value="InterPro"/>
</dbReference>
<dbReference type="GO" id="GO:0004347">
    <property type="term" value="F:glucose-6-phosphate isomerase activity"/>
    <property type="evidence" value="ECO:0007669"/>
    <property type="project" value="UniProtKB-UniRule"/>
</dbReference>
<dbReference type="GO" id="GO:0048029">
    <property type="term" value="F:monosaccharide binding"/>
    <property type="evidence" value="ECO:0007669"/>
    <property type="project" value="TreeGrafter"/>
</dbReference>
<dbReference type="GO" id="GO:0006094">
    <property type="term" value="P:gluconeogenesis"/>
    <property type="evidence" value="ECO:0007669"/>
    <property type="project" value="UniProtKB-UniRule"/>
</dbReference>
<dbReference type="GO" id="GO:0051156">
    <property type="term" value="P:glucose 6-phosphate metabolic process"/>
    <property type="evidence" value="ECO:0007669"/>
    <property type="project" value="TreeGrafter"/>
</dbReference>
<dbReference type="GO" id="GO:0006096">
    <property type="term" value="P:glycolytic process"/>
    <property type="evidence" value="ECO:0007669"/>
    <property type="project" value="UniProtKB-UniRule"/>
</dbReference>
<dbReference type="CDD" id="cd05015">
    <property type="entry name" value="SIS_PGI_1"/>
    <property type="match status" value="1"/>
</dbReference>
<dbReference type="CDD" id="cd05016">
    <property type="entry name" value="SIS_PGI_2"/>
    <property type="match status" value="1"/>
</dbReference>
<dbReference type="FunFam" id="1.10.1390.10:FF:000001">
    <property type="entry name" value="Glucose-6-phosphate isomerase"/>
    <property type="match status" value="1"/>
</dbReference>
<dbReference type="FunFam" id="3.40.50.10490:FF:000004">
    <property type="entry name" value="Glucose-6-phosphate isomerase"/>
    <property type="match status" value="1"/>
</dbReference>
<dbReference type="Gene3D" id="1.10.1390.10">
    <property type="match status" value="1"/>
</dbReference>
<dbReference type="Gene3D" id="3.40.50.10490">
    <property type="entry name" value="Glucose-6-phosphate isomerase like protein, domain 1"/>
    <property type="match status" value="2"/>
</dbReference>
<dbReference type="HAMAP" id="MF_00473">
    <property type="entry name" value="G6P_isomerase"/>
    <property type="match status" value="1"/>
</dbReference>
<dbReference type="InterPro" id="IPR001672">
    <property type="entry name" value="G6P_Isomerase"/>
</dbReference>
<dbReference type="InterPro" id="IPR023096">
    <property type="entry name" value="G6P_Isomerase_C"/>
</dbReference>
<dbReference type="InterPro" id="IPR018189">
    <property type="entry name" value="Phosphoglucose_isomerase_CS"/>
</dbReference>
<dbReference type="InterPro" id="IPR046348">
    <property type="entry name" value="SIS_dom_sf"/>
</dbReference>
<dbReference type="InterPro" id="IPR035476">
    <property type="entry name" value="SIS_PGI_1"/>
</dbReference>
<dbReference type="InterPro" id="IPR035482">
    <property type="entry name" value="SIS_PGI_2"/>
</dbReference>
<dbReference type="NCBIfam" id="NF001211">
    <property type="entry name" value="PRK00179.1"/>
    <property type="match status" value="1"/>
</dbReference>
<dbReference type="PANTHER" id="PTHR11469">
    <property type="entry name" value="GLUCOSE-6-PHOSPHATE ISOMERASE"/>
    <property type="match status" value="1"/>
</dbReference>
<dbReference type="PANTHER" id="PTHR11469:SF1">
    <property type="entry name" value="GLUCOSE-6-PHOSPHATE ISOMERASE"/>
    <property type="match status" value="1"/>
</dbReference>
<dbReference type="Pfam" id="PF00342">
    <property type="entry name" value="PGI"/>
    <property type="match status" value="1"/>
</dbReference>
<dbReference type="PRINTS" id="PR00662">
    <property type="entry name" value="G6PISOMERASE"/>
</dbReference>
<dbReference type="SUPFAM" id="SSF53697">
    <property type="entry name" value="SIS domain"/>
    <property type="match status" value="1"/>
</dbReference>
<dbReference type="PROSITE" id="PS00765">
    <property type="entry name" value="P_GLUCOSE_ISOMERASE_1"/>
    <property type="match status" value="1"/>
</dbReference>
<dbReference type="PROSITE" id="PS00174">
    <property type="entry name" value="P_GLUCOSE_ISOMERASE_2"/>
    <property type="match status" value="1"/>
</dbReference>
<dbReference type="PROSITE" id="PS51463">
    <property type="entry name" value="P_GLUCOSE_ISOMERASE_3"/>
    <property type="match status" value="1"/>
</dbReference>
<comment type="function">
    <text evidence="1">Catalyzes the reversible isomerization of glucose-6-phosphate to fructose-6-phosphate.</text>
</comment>
<comment type="catalytic activity">
    <reaction evidence="1">
        <text>alpha-D-glucose 6-phosphate = beta-D-fructose 6-phosphate</text>
        <dbReference type="Rhea" id="RHEA:11816"/>
        <dbReference type="ChEBI" id="CHEBI:57634"/>
        <dbReference type="ChEBI" id="CHEBI:58225"/>
        <dbReference type="EC" id="5.3.1.9"/>
    </reaction>
</comment>
<comment type="pathway">
    <text evidence="1">Carbohydrate biosynthesis; gluconeogenesis.</text>
</comment>
<comment type="pathway">
    <text evidence="1">Carbohydrate degradation; glycolysis; D-glyceraldehyde 3-phosphate and glycerone phosphate from D-glucose: step 2/4.</text>
</comment>
<comment type="subcellular location">
    <subcellularLocation>
        <location evidence="1">Cytoplasm</location>
    </subcellularLocation>
</comment>
<comment type="similarity">
    <text evidence="1 2">Belongs to the GPI family.</text>
</comment>